<gene>
    <name evidence="1" type="primary">rpsM</name>
    <name type="ordered locus">Cvib_0270</name>
</gene>
<evidence type="ECO:0000255" key="1">
    <source>
        <dbReference type="HAMAP-Rule" id="MF_01315"/>
    </source>
</evidence>
<evidence type="ECO:0000256" key="2">
    <source>
        <dbReference type="SAM" id="MobiDB-lite"/>
    </source>
</evidence>
<evidence type="ECO:0000305" key="3"/>
<sequence length="125" mass="13950">MRIAGVNLPLNKHAVIALTHVYGIGKTTAKTILQRTGIAPDRKISDLNDAEAHSIRELIAEEYKVEGQARGEQQLSIKRLMDVGCYRGLRHRRSLPVRGQNTQTNARTRKGKRKTVAGKKKAARK</sequence>
<accession>A4SCT3</accession>
<dbReference type="EMBL" id="CP000607">
    <property type="protein sequence ID" value="ABP36292.1"/>
    <property type="molecule type" value="Genomic_DNA"/>
</dbReference>
<dbReference type="SMR" id="A4SCT3"/>
<dbReference type="STRING" id="290318.Cvib_0270"/>
<dbReference type="KEGG" id="pvi:Cvib_0270"/>
<dbReference type="eggNOG" id="COG0099">
    <property type="taxonomic scope" value="Bacteria"/>
</dbReference>
<dbReference type="HOGENOM" id="CLU_103849_1_2_10"/>
<dbReference type="OrthoDB" id="9803610at2"/>
<dbReference type="GO" id="GO:0005829">
    <property type="term" value="C:cytosol"/>
    <property type="evidence" value="ECO:0007669"/>
    <property type="project" value="TreeGrafter"/>
</dbReference>
<dbReference type="GO" id="GO:0015935">
    <property type="term" value="C:small ribosomal subunit"/>
    <property type="evidence" value="ECO:0007669"/>
    <property type="project" value="TreeGrafter"/>
</dbReference>
<dbReference type="GO" id="GO:0019843">
    <property type="term" value="F:rRNA binding"/>
    <property type="evidence" value="ECO:0007669"/>
    <property type="project" value="UniProtKB-UniRule"/>
</dbReference>
<dbReference type="GO" id="GO:0003735">
    <property type="term" value="F:structural constituent of ribosome"/>
    <property type="evidence" value="ECO:0007669"/>
    <property type="project" value="InterPro"/>
</dbReference>
<dbReference type="GO" id="GO:0000049">
    <property type="term" value="F:tRNA binding"/>
    <property type="evidence" value="ECO:0007669"/>
    <property type="project" value="UniProtKB-UniRule"/>
</dbReference>
<dbReference type="GO" id="GO:0006412">
    <property type="term" value="P:translation"/>
    <property type="evidence" value="ECO:0007669"/>
    <property type="project" value="UniProtKB-UniRule"/>
</dbReference>
<dbReference type="FunFam" id="1.10.8.50:FF:000001">
    <property type="entry name" value="30S ribosomal protein S13"/>
    <property type="match status" value="1"/>
</dbReference>
<dbReference type="FunFam" id="4.10.910.10:FF:000001">
    <property type="entry name" value="30S ribosomal protein S13"/>
    <property type="match status" value="1"/>
</dbReference>
<dbReference type="Gene3D" id="1.10.8.50">
    <property type="match status" value="1"/>
</dbReference>
<dbReference type="Gene3D" id="4.10.910.10">
    <property type="entry name" value="30s ribosomal protein s13, domain 2"/>
    <property type="match status" value="1"/>
</dbReference>
<dbReference type="HAMAP" id="MF_01315">
    <property type="entry name" value="Ribosomal_uS13"/>
    <property type="match status" value="1"/>
</dbReference>
<dbReference type="InterPro" id="IPR027437">
    <property type="entry name" value="Rbsml_uS13_C"/>
</dbReference>
<dbReference type="InterPro" id="IPR001892">
    <property type="entry name" value="Ribosomal_uS13"/>
</dbReference>
<dbReference type="InterPro" id="IPR010979">
    <property type="entry name" value="Ribosomal_uS13-like_H2TH"/>
</dbReference>
<dbReference type="InterPro" id="IPR019980">
    <property type="entry name" value="Ribosomal_uS13_bac-type"/>
</dbReference>
<dbReference type="InterPro" id="IPR018269">
    <property type="entry name" value="Ribosomal_uS13_CS"/>
</dbReference>
<dbReference type="NCBIfam" id="TIGR03631">
    <property type="entry name" value="uS13_bact"/>
    <property type="match status" value="1"/>
</dbReference>
<dbReference type="PANTHER" id="PTHR10871">
    <property type="entry name" value="30S RIBOSOMAL PROTEIN S13/40S RIBOSOMAL PROTEIN S18"/>
    <property type="match status" value="1"/>
</dbReference>
<dbReference type="PANTHER" id="PTHR10871:SF1">
    <property type="entry name" value="SMALL RIBOSOMAL SUBUNIT PROTEIN US13M"/>
    <property type="match status" value="1"/>
</dbReference>
<dbReference type="Pfam" id="PF00416">
    <property type="entry name" value="Ribosomal_S13"/>
    <property type="match status" value="1"/>
</dbReference>
<dbReference type="PIRSF" id="PIRSF002134">
    <property type="entry name" value="Ribosomal_S13"/>
    <property type="match status" value="1"/>
</dbReference>
<dbReference type="SUPFAM" id="SSF46946">
    <property type="entry name" value="S13-like H2TH domain"/>
    <property type="match status" value="1"/>
</dbReference>
<dbReference type="PROSITE" id="PS00646">
    <property type="entry name" value="RIBOSOMAL_S13_1"/>
    <property type="match status" value="1"/>
</dbReference>
<dbReference type="PROSITE" id="PS50159">
    <property type="entry name" value="RIBOSOMAL_S13_2"/>
    <property type="match status" value="1"/>
</dbReference>
<proteinExistence type="inferred from homology"/>
<organism>
    <name type="scientific">Chlorobium phaeovibrioides (strain DSM 265 / 1930)</name>
    <name type="common">Prosthecochloris vibrioformis (strain DSM 265)</name>
    <dbReference type="NCBI Taxonomy" id="290318"/>
    <lineage>
        <taxon>Bacteria</taxon>
        <taxon>Pseudomonadati</taxon>
        <taxon>Chlorobiota</taxon>
        <taxon>Chlorobiia</taxon>
        <taxon>Chlorobiales</taxon>
        <taxon>Chlorobiaceae</taxon>
        <taxon>Chlorobium/Pelodictyon group</taxon>
        <taxon>Chlorobium</taxon>
    </lineage>
</organism>
<comment type="function">
    <text evidence="1">Located at the top of the head of the 30S subunit, it contacts several helices of the 16S rRNA. In the 70S ribosome it contacts the 23S rRNA (bridge B1a) and protein L5 of the 50S subunit (bridge B1b), connecting the 2 subunits; these bridges are implicated in subunit movement. Contacts the tRNAs in the A and P-sites.</text>
</comment>
<comment type="subunit">
    <text evidence="1">Part of the 30S ribosomal subunit. Forms a loose heterodimer with protein S19. Forms two bridges to the 50S subunit in the 70S ribosome.</text>
</comment>
<comment type="similarity">
    <text evidence="1">Belongs to the universal ribosomal protein uS13 family.</text>
</comment>
<keyword id="KW-0687">Ribonucleoprotein</keyword>
<keyword id="KW-0689">Ribosomal protein</keyword>
<keyword id="KW-0694">RNA-binding</keyword>
<keyword id="KW-0699">rRNA-binding</keyword>
<keyword id="KW-0820">tRNA-binding</keyword>
<protein>
    <recommendedName>
        <fullName evidence="1">Small ribosomal subunit protein uS13</fullName>
    </recommendedName>
    <alternativeName>
        <fullName evidence="3">30S ribosomal protein S13</fullName>
    </alternativeName>
</protein>
<name>RS13_CHLPM</name>
<feature type="chain" id="PRO_1000086251" description="Small ribosomal subunit protein uS13">
    <location>
        <begin position="1"/>
        <end position="125"/>
    </location>
</feature>
<feature type="region of interest" description="Disordered" evidence="2">
    <location>
        <begin position="91"/>
        <end position="125"/>
    </location>
</feature>
<feature type="compositionally biased region" description="Basic residues" evidence="2">
    <location>
        <begin position="107"/>
        <end position="125"/>
    </location>
</feature>
<reference key="1">
    <citation type="submission" date="2007-03" db="EMBL/GenBank/DDBJ databases">
        <title>Complete sequence of Prosthecochloris vibrioformis DSM 265.</title>
        <authorList>
            <consortium name="US DOE Joint Genome Institute"/>
            <person name="Copeland A."/>
            <person name="Lucas S."/>
            <person name="Lapidus A."/>
            <person name="Barry K."/>
            <person name="Detter J.C."/>
            <person name="Glavina del Rio T."/>
            <person name="Hammon N."/>
            <person name="Israni S."/>
            <person name="Pitluck S."/>
            <person name="Schmutz J."/>
            <person name="Larimer F."/>
            <person name="Land M."/>
            <person name="Hauser L."/>
            <person name="Mikhailova N."/>
            <person name="Li T."/>
            <person name="Overmann J."/>
            <person name="Schuster S.C."/>
            <person name="Bryant D.A."/>
            <person name="Richardson P."/>
        </authorList>
    </citation>
    <scope>NUCLEOTIDE SEQUENCE [LARGE SCALE GENOMIC DNA]</scope>
    <source>
        <strain>DSM 265 / 1930</strain>
    </source>
</reference>